<feature type="chain" id="PRO_1000068007" description="Large ribosomal subunit protein uL14">
    <location>
        <begin position="1"/>
        <end position="123"/>
    </location>
</feature>
<proteinExistence type="inferred from homology"/>
<protein>
    <recommendedName>
        <fullName evidence="1">Large ribosomal subunit protein uL14</fullName>
    </recommendedName>
    <alternativeName>
        <fullName evidence="2">50S ribosomal protein L14</fullName>
    </alternativeName>
</protein>
<gene>
    <name evidence="1" type="primary">rplN</name>
    <name type="ordered locus">Ent638_3741</name>
</gene>
<sequence>MIQEQTMLTVADNSGARRVMCIKVLGGSHRRYAGVGDIIKITIKEAIPRGKVKKGDVLKAVVVRTRKGVRRPDGSVIRFDGNACVILNNNSEQPIGTRIFGPVTRELRTEKFMKIISLAPEVL</sequence>
<keyword id="KW-0687">Ribonucleoprotein</keyword>
<keyword id="KW-0689">Ribosomal protein</keyword>
<keyword id="KW-0694">RNA-binding</keyword>
<keyword id="KW-0699">rRNA-binding</keyword>
<reference key="1">
    <citation type="journal article" date="2010" name="PLoS Genet.">
        <title>Genome sequence of the plant growth promoting endophytic bacterium Enterobacter sp. 638.</title>
        <authorList>
            <person name="Taghavi S."/>
            <person name="van der Lelie D."/>
            <person name="Hoffman A."/>
            <person name="Zhang Y.B."/>
            <person name="Walla M.D."/>
            <person name="Vangronsveld J."/>
            <person name="Newman L."/>
            <person name="Monchy S."/>
        </authorList>
    </citation>
    <scope>NUCLEOTIDE SEQUENCE [LARGE SCALE GENOMIC DNA]</scope>
    <source>
        <strain>638</strain>
    </source>
</reference>
<name>RL14_ENT38</name>
<accession>A4WFB8</accession>
<evidence type="ECO:0000255" key="1">
    <source>
        <dbReference type="HAMAP-Rule" id="MF_01367"/>
    </source>
</evidence>
<evidence type="ECO:0000305" key="2"/>
<dbReference type="EMBL" id="CP000653">
    <property type="protein sequence ID" value="ABP62398.1"/>
    <property type="molecule type" value="Genomic_DNA"/>
</dbReference>
<dbReference type="RefSeq" id="WP_015960712.1">
    <property type="nucleotide sequence ID" value="NC_009436.1"/>
</dbReference>
<dbReference type="SMR" id="A4WFB8"/>
<dbReference type="STRING" id="399742.Ent638_3741"/>
<dbReference type="GeneID" id="97603659"/>
<dbReference type="KEGG" id="ent:Ent638_3741"/>
<dbReference type="eggNOG" id="COG0093">
    <property type="taxonomic scope" value="Bacteria"/>
</dbReference>
<dbReference type="HOGENOM" id="CLU_095071_2_1_6"/>
<dbReference type="OrthoDB" id="9806379at2"/>
<dbReference type="Proteomes" id="UP000000230">
    <property type="component" value="Chromosome"/>
</dbReference>
<dbReference type="GO" id="GO:0022625">
    <property type="term" value="C:cytosolic large ribosomal subunit"/>
    <property type="evidence" value="ECO:0007669"/>
    <property type="project" value="TreeGrafter"/>
</dbReference>
<dbReference type="GO" id="GO:0070180">
    <property type="term" value="F:large ribosomal subunit rRNA binding"/>
    <property type="evidence" value="ECO:0007669"/>
    <property type="project" value="TreeGrafter"/>
</dbReference>
<dbReference type="GO" id="GO:0003735">
    <property type="term" value="F:structural constituent of ribosome"/>
    <property type="evidence" value="ECO:0007669"/>
    <property type="project" value="InterPro"/>
</dbReference>
<dbReference type="GO" id="GO:0006412">
    <property type="term" value="P:translation"/>
    <property type="evidence" value="ECO:0007669"/>
    <property type="project" value="UniProtKB-UniRule"/>
</dbReference>
<dbReference type="CDD" id="cd00337">
    <property type="entry name" value="Ribosomal_uL14"/>
    <property type="match status" value="1"/>
</dbReference>
<dbReference type="FunFam" id="2.40.150.20:FF:000001">
    <property type="entry name" value="50S ribosomal protein L14"/>
    <property type="match status" value="1"/>
</dbReference>
<dbReference type="Gene3D" id="2.40.150.20">
    <property type="entry name" value="Ribosomal protein L14"/>
    <property type="match status" value="1"/>
</dbReference>
<dbReference type="HAMAP" id="MF_01367">
    <property type="entry name" value="Ribosomal_uL14"/>
    <property type="match status" value="1"/>
</dbReference>
<dbReference type="InterPro" id="IPR000218">
    <property type="entry name" value="Ribosomal_uL14"/>
</dbReference>
<dbReference type="InterPro" id="IPR005745">
    <property type="entry name" value="Ribosomal_uL14_bac-type"/>
</dbReference>
<dbReference type="InterPro" id="IPR019972">
    <property type="entry name" value="Ribosomal_uL14_CS"/>
</dbReference>
<dbReference type="InterPro" id="IPR036853">
    <property type="entry name" value="Ribosomal_uL14_sf"/>
</dbReference>
<dbReference type="NCBIfam" id="TIGR01067">
    <property type="entry name" value="rplN_bact"/>
    <property type="match status" value="1"/>
</dbReference>
<dbReference type="PANTHER" id="PTHR11761">
    <property type="entry name" value="50S/60S RIBOSOMAL PROTEIN L14/L23"/>
    <property type="match status" value="1"/>
</dbReference>
<dbReference type="PANTHER" id="PTHR11761:SF3">
    <property type="entry name" value="LARGE RIBOSOMAL SUBUNIT PROTEIN UL14M"/>
    <property type="match status" value="1"/>
</dbReference>
<dbReference type="Pfam" id="PF00238">
    <property type="entry name" value="Ribosomal_L14"/>
    <property type="match status" value="1"/>
</dbReference>
<dbReference type="SMART" id="SM01374">
    <property type="entry name" value="Ribosomal_L14"/>
    <property type="match status" value="1"/>
</dbReference>
<dbReference type="SUPFAM" id="SSF50193">
    <property type="entry name" value="Ribosomal protein L14"/>
    <property type="match status" value="1"/>
</dbReference>
<dbReference type="PROSITE" id="PS00049">
    <property type="entry name" value="RIBOSOMAL_L14"/>
    <property type="match status" value="1"/>
</dbReference>
<organism>
    <name type="scientific">Enterobacter sp. (strain 638)</name>
    <dbReference type="NCBI Taxonomy" id="399742"/>
    <lineage>
        <taxon>Bacteria</taxon>
        <taxon>Pseudomonadati</taxon>
        <taxon>Pseudomonadota</taxon>
        <taxon>Gammaproteobacteria</taxon>
        <taxon>Enterobacterales</taxon>
        <taxon>Enterobacteriaceae</taxon>
        <taxon>Enterobacter</taxon>
    </lineage>
</organism>
<comment type="function">
    <text evidence="1">Binds to 23S rRNA. Forms part of two intersubunit bridges in the 70S ribosome.</text>
</comment>
<comment type="subunit">
    <text evidence="1">Part of the 50S ribosomal subunit. Forms a cluster with proteins L3 and L19. In the 70S ribosome, L14 and L19 interact and together make contacts with the 16S rRNA in bridges B5 and B8.</text>
</comment>
<comment type="similarity">
    <text evidence="1">Belongs to the universal ribosomal protein uL14 family.</text>
</comment>